<protein>
    <recommendedName>
        <fullName>Attractin</fullName>
    </recommendedName>
</protein>
<evidence type="ECO:0000250" key="1"/>
<evidence type="ECO:0000269" key="2">
    <source ref="2"/>
</evidence>
<evidence type="ECO:0000305" key="3"/>
<sequence length="58" mass="6358">DQNCDIGNITSQCEMQHQNCDDANGCNTIIEECKTSMVERCQNQEFESASGSTTLGPQ</sequence>
<accession>Q7M459</accession>
<accession>Q7M4A6</accession>
<gene>
    <name type="primary">ATT</name>
</gene>
<comment type="function">
    <text evidence="1">Water-borne pheromone that attract the marine mollusk Aplysia into breeding aggregations and coordinate male and female reproductive behavior within the aggregation.</text>
</comment>
<comment type="subcellular location">
    <subcellularLocation>
        <location evidence="1">Secreted</location>
    </subcellularLocation>
</comment>
<comment type="tissue specificity">
    <text>Produced by the albumen gland of the egg cordons.</text>
</comment>
<organism>
    <name type="scientific">Aplysia fasciata</name>
    <name type="common">Mottled sea hare</name>
    <name type="synonym">Aplysia brasiliana</name>
    <dbReference type="NCBI Taxonomy" id="144767"/>
    <lineage>
        <taxon>Eukaryota</taxon>
        <taxon>Metazoa</taxon>
        <taxon>Spiralia</taxon>
        <taxon>Lophotrochozoa</taxon>
        <taxon>Mollusca</taxon>
        <taxon>Gastropoda</taxon>
        <taxon>Heterobranchia</taxon>
        <taxon>Euthyneura</taxon>
        <taxon>Tectipleura</taxon>
        <taxon>Aplysiida</taxon>
        <taxon>Aplysioidea</taxon>
        <taxon>Aplysiidae</taxon>
        <taxon>Aplysia</taxon>
    </lineage>
</organism>
<keyword id="KW-0903">Direct protein sequencing</keyword>
<keyword id="KW-1015">Disulfide bond</keyword>
<keyword id="KW-0325">Glycoprotein</keyword>
<keyword id="KW-0588">Pheromone</keyword>
<keyword id="KW-0964">Secreted</keyword>
<reference key="1">
    <citation type="submission" date="1999-07" db="PIR data bank">
        <authorList>
            <person name="Painter S.D."/>
            <person name="Akalal D.-B.G."/>
            <person name="Nagle G.T."/>
        </authorList>
    </citation>
    <scope>PROTEIN SEQUENCE</scope>
    <source>
        <tissue>Albumen gland</tissue>
    </source>
</reference>
<reference key="2">
    <citation type="submission" date="2002-09" db="PIR data bank">
        <authorList>
            <person name="Nagle G.T."/>
        </authorList>
    </citation>
    <scope>PROTEIN SEQUENCE</scope>
    <scope>DISULFIDE BONDS</scope>
    <scope>GLYCOSYLATION AT ASN-8</scope>
    <source>
        <tissue>Albumen gland</tissue>
    </source>
</reference>
<dbReference type="PIR" id="A59447">
    <property type="entry name" value="A59447"/>
</dbReference>
<dbReference type="PIR" id="B59060">
    <property type="entry name" value="B59060"/>
</dbReference>
<dbReference type="SMR" id="Q7M459"/>
<dbReference type="GlyCosmos" id="Q7M459">
    <property type="glycosylation" value="1 site, No reported glycans"/>
</dbReference>
<dbReference type="GO" id="GO:0005576">
    <property type="term" value="C:extracellular region"/>
    <property type="evidence" value="ECO:0007669"/>
    <property type="project" value="UniProtKB-SubCell"/>
</dbReference>
<dbReference type="GO" id="GO:0000772">
    <property type="term" value="F:mating pheromone activity"/>
    <property type="evidence" value="ECO:0007669"/>
    <property type="project" value="InterPro"/>
</dbReference>
<dbReference type="GO" id="GO:0019953">
    <property type="term" value="P:sexual reproduction"/>
    <property type="evidence" value="ECO:0007669"/>
    <property type="project" value="InterPro"/>
</dbReference>
<dbReference type="Gene3D" id="1.20.1400.10">
    <property type="entry name" value="Attractin"/>
    <property type="match status" value="1"/>
</dbReference>
<dbReference type="InterPro" id="IPR012529">
    <property type="entry name" value="Attractin"/>
</dbReference>
<dbReference type="InterPro" id="IPR036585">
    <property type="entry name" value="Attractin_sf"/>
</dbReference>
<dbReference type="Pfam" id="PF08037">
    <property type="entry name" value="Attractin"/>
    <property type="match status" value="1"/>
</dbReference>
<dbReference type="SUPFAM" id="SSF90183">
    <property type="entry name" value="Mollusk pheromone"/>
    <property type="match status" value="1"/>
</dbReference>
<proteinExistence type="evidence at protein level"/>
<name>ATT_APLFA</name>
<feature type="chain" id="PRO_0000064745" description="Attractin">
    <location>
        <begin position="1"/>
        <end position="58"/>
    </location>
</feature>
<feature type="glycosylation site" description="N-linked (GlcNAc...) asparagine" evidence="2">
    <location>
        <position position="8"/>
    </location>
</feature>
<feature type="disulfide bond" evidence="2">
    <location>
        <begin position="4"/>
        <end position="41"/>
    </location>
</feature>
<feature type="disulfide bond" evidence="2">
    <location>
        <begin position="13"/>
        <end position="33"/>
    </location>
</feature>
<feature type="disulfide bond" evidence="2">
    <location>
        <begin position="20"/>
        <end position="26"/>
    </location>
</feature>
<feature type="sequence conflict" description="In Ref. 1; AA sequence." evidence="3" ref="1">
    <original>E</original>
    <variation>Q</variation>
    <location>
        <position position="14"/>
    </location>
</feature>
<feature type="sequence conflict" description="In Ref. 1; AA sequence." evidence="3" ref="1">
    <original>N</original>
    <variation>D</variation>
    <location>
        <position position="27"/>
    </location>
</feature>